<sequence length="476" mass="50589">MGTTSSQSKTLYQKLYDAHIVHEAPNETPLLYIDRHLVHEVTSPQAFDGLRAMGRPVRQPGKTFATMDHNVSTQTKDINASGEMARIQMQELIKNCAEFGVSLYDLNHPFQGIVHVIGPEQGMTLPGMTIVCGDSHTATHGAFGSLAFGIGTSEVEHVLATQTLKQGRAKTMRIEVNGTVGAGITAKDIVLAIIGKTGSAGGTGHVVEFCGSAIEALSMEGRMTLCNMAIEMGAKAGLVAPDDTTFAYLKGRQFAPTGEQWEQGVAYWRTLKSDADAQFDTIVTLDAADIAPQVTWGTNPGQVIAVNQIIPAPESFSDPVERASAEKALAYMDLRPGIKLTEVAIDKVFIGSCTNSRIEDLRAAAAIAQGRKVAKGVQAIVVPGSGPVKAQAEAEGLDKIFIAAGFEWRLPGCSMCLAMNNDRLEPGERCASTSNRNFEGRQGRGGRTHLVSPAMAAAAAVSGHFADVRELSATTH</sequence>
<feature type="chain" id="PRO_0000076848" description="3-isopropylmalate dehydratase large subunit">
    <location>
        <begin position="1"/>
        <end position="476"/>
    </location>
</feature>
<feature type="binding site" evidence="1">
    <location>
        <position position="353"/>
    </location>
    <ligand>
        <name>[4Fe-4S] cluster</name>
        <dbReference type="ChEBI" id="CHEBI:49883"/>
    </ligand>
</feature>
<feature type="binding site" evidence="1">
    <location>
        <position position="413"/>
    </location>
    <ligand>
        <name>[4Fe-4S] cluster</name>
        <dbReference type="ChEBI" id="CHEBI:49883"/>
    </ligand>
</feature>
<feature type="binding site" evidence="1">
    <location>
        <position position="416"/>
    </location>
    <ligand>
        <name>[4Fe-4S] cluster</name>
        <dbReference type="ChEBI" id="CHEBI:49883"/>
    </ligand>
</feature>
<organism>
    <name type="scientific">Yersinia pestis</name>
    <dbReference type="NCBI Taxonomy" id="632"/>
    <lineage>
        <taxon>Bacteria</taxon>
        <taxon>Pseudomonadati</taxon>
        <taxon>Pseudomonadota</taxon>
        <taxon>Gammaproteobacteria</taxon>
        <taxon>Enterobacterales</taxon>
        <taxon>Yersiniaceae</taxon>
        <taxon>Yersinia</taxon>
    </lineage>
</organism>
<proteinExistence type="inferred from homology"/>
<gene>
    <name evidence="1" type="primary">leuC</name>
    <name type="ordered locus">YPO0531</name>
    <name type="ordered locus">y3647</name>
    <name type="ordered locus">YP_3651</name>
</gene>
<keyword id="KW-0004">4Fe-4S</keyword>
<keyword id="KW-0028">Amino-acid biosynthesis</keyword>
<keyword id="KW-0100">Branched-chain amino acid biosynthesis</keyword>
<keyword id="KW-0408">Iron</keyword>
<keyword id="KW-0411">Iron-sulfur</keyword>
<keyword id="KW-0432">Leucine biosynthesis</keyword>
<keyword id="KW-0456">Lyase</keyword>
<keyword id="KW-0479">Metal-binding</keyword>
<keyword id="KW-1185">Reference proteome</keyword>
<protein>
    <recommendedName>
        <fullName evidence="1">3-isopropylmalate dehydratase large subunit</fullName>
        <ecNumber evidence="1">4.2.1.33</ecNumber>
    </recommendedName>
    <alternativeName>
        <fullName evidence="1">Alpha-IPM isomerase</fullName>
        <shortName evidence="1">IPMI</shortName>
    </alternativeName>
    <alternativeName>
        <fullName evidence="1">Isopropylmalate isomerase</fullName>
    </alternativeName>
</protein>
<dbReference type="EC" id="4.2.1.33" evidence="1"/>
<dbReference type="EMBL" id="AL590842">
    <property type="protein sequence ID" value="CAL19211.1"/>
    <property type="molecule type" value="Genomic_DNA"/>
</dbReference>
<dbReference type="EMBL" id="AE009952">
    <property type="protein sequence ID" value="AAM87195.1"/>
    <property type="status" value="ALT_INIT"/>
    <property type="molecule type" value="Genomic_DNA"/>
</dbReference>
<dbReference type="EMBL" id="AE017042">
    <property type="protein sequence ID" value="AAS63799.1"/>
    <property type="status" value="ALT_INIT"/>
    <property type="molecule type" value="Genomic_DNA"/>
</dbReference>
<dbReference type="PIR" id="AI0065">
    <property type="entry name" value="AI0065"/>
</dbReference>
<dbReference type="RefSeq" id="WP_002210455.1">
    <property type="nucleotide sequence ID" value="NZ_WUCM01000024.1"/>
</dbReference>
<dbReference type="RefSeq" id="YP_002345603.1">
    <property type="nucleotide sequence ID" value="NC_003143.1"/>
</dbReference>
<dbReference type="SMR" id="Q8ZIH0"/>
<dbReference type="STRING" id="214092.YPO0531"/>
<dbReference type="PaxDb" id="214092-YPO0531"/>
<dbReference type="DNASU" id="1148594"/>
<dbReference type="EnsemblBacteria" id="AAS63799">
    <property type="protein sequence ID" value="AAS63799"/>
    <property type="gene ID" value="YP_3651"/>
</dbReference>
<dbReference type="GeneID" id="57974081"/>
<dbReference type="KEGG" id="ype:YPO0531"/>
<dbReference type="KEGG" id="ypk:y3647"/>
<dbReference type="KEGG" id="ypm:YP_3651"/>
<dbReference type="PATRIC" id="fig|214092.21.peg.784"/>
<dbReference type="eggNOG" id="COG0065">
    <property type="taxonomic scope" value="Bacteria"/>
</dbReference>
<dbReference type="HOGENOM" id="CLU_006714_3_4_6"/>
<dbReference type="OMA" id="WDDHVVR"/>
<dbReference type="OrthoDB" id="9802769at2"/>
<dbReference type="UniPathway" id="UPA00048">
    <property type="reaction ID" value="UER00071"/>
</dbReference>
<dbReference type="Proteomes" id="UP000000815">
    <property type="component" value="Chromosome"/>
</dbReference>
<dbReference type="Proteomes" id="UP000001019">
    <property type="component" value="Chromosome"/>
</dbReference>
<dbReference type="Proteomes" id="UP000002490">
    <property type="component" value="Chromosome"/>
</dbReference>
<dbReference type="GO" id="GO:0003861">
    <property type="term" value="F:3-isopropylmalate dehydratase activity"/>
    <property type="evidence" value="ECO:0007669"/>
    <property type="project" value="UniProtKB-UniRule"/>
</dbReference>
<dbReference type="GO" id="GO:0051539">
    <property type="term" value="F:4 iron, 4 sulfur cluster binding"/>
    <property type="evidence" value="ECO:0007669"/>
    <property type="project" value="UniProtKB-KW"/>
</dbReference>
<dbReference type="GO" id="GO:0046872">
    <property type="term" value="F:metal ion binding"/>
    <property type="evidence" value="ECO:0007669"/>
    <property type="project" value="UniProtKB-KW"/>
</dbReference>
<dbReference type="GO" id="GO:0009098">
    <property type="term" value="P:L-leucine biosynthetic process"/>
    <property type="evidence" value="ECO:0007669"/>
    <property type="project" value="UniProtKB-UniRule"/>
</dbReference>
<dbReference type="CDD" id="cd01583">
    <property type="entry name" value="IPMI"/>
    <property type="match status" value="1"/>
</dbReference>
<dbReference type="FunFam" id="3.30.499.10:FF:000006">
    <property type="entry name" value="3-isopropylmalate dehydratase large subunit"/>
    <property type="match status" value="1"/>
</dbReference>
<dbReference type="FunFam" id="3.30.499.10:FF:000007">
    <property type="entry name" value="3-isopropylmalate dehydratase large subunit"/>
    <property type="match status" value="1"/>
</dbReference>
<dbReference type="Gene3D" id="3.30.499.10">
    <property type="entry name" value="Aconitase, domain 3"/>
    <property type="match status" value="2"/>
</dbReference>
<dbReference type="HAMAP" id="MF_01026">
    <property type="entry name" value="LeuC_type1"/>
    <property type="match status" value="1"/>
</dbReference>
<dbReference type="InterPro" id="IPR004430">
    <property type="entry name" value="3-IsopropMal_deHydase_lsu"/>
</dbReference>
<dbReference type="InterPro" id="IPR015931">
    <property type="entry name" value="Acnase/IPM_dHydase_lsu_aba_1/3"/>
</dbReference>
<dbReference type="InterPro" id="IPR001030">
    <property type="entry name" value="Acoase/IPM_deHydtase_lsu_aba"/>
</dbReference>
<dbReference type="InterPro" id="IPR018136">
    <property type="entry name" value="Aconitase_4Fe-4S_BS"/>
</dbReference>
<dbReference type="InterPro" id="IPR036008">
    <property type="entry name" value="Aconitase_4Fe-4S_dom"/>
</dbReference>
<dbReference type="InterPro" id="IPR050067">
    <property type="entry name" value="IPM_dehydratase_rel_enz"/>
</dbReference>
<dbReference type="InterPro" id="IPR033941">
    <property type="entry name" value="IPMI_cat"/>
</dbReference>
<dbReference type="NCBIfam" id="TIGR00170">
    <property type="entry name" value="leuC"/>
    <property type="match status" value="1"/>
</dbReference>
<dbReference type="NCBIfam" id="NF004016">
    <property type="entry name" value="PRK05478.1"/>
    <property type="match status" value="1"/>
</dbReference>
<dbReference type="NCBIfam" id="NF009116">
    <property type="entry name" value="PRK12466.1"/>
    <property type="match status" value="1"/>
</dbReference>
<dbReference type="PANTHER" id="PTHR43822:SF9">
    <property type="entry name" value="3-ISOPROPYLMALATE DEHYDRATASE"/>
    <property type="match status" value="1"/>
</dbReference>
<dbReference type="PANTHER" id="PTHR43822">
    <property type="entry name" value="HOMOACONITASE, MITOCHONDRIAL-RELATED"/>
    <property type="match status" value="1"/>
</dbReference>
<dbReference type="Pfam" id="PF00330">
    <property type="entry name" value="Aconitase"/>
    <property type="match status" value="1"/>
</dbReference>
<dbReference type="PRINTS" id="PR00415">
    <property type="entry name" value="ACONITASE"/>
</dbReference>
<dbReference type="SUPFAM" id="SSF53732">
    <property type="entry name" value="Aconitase iron-sulfur domain"/>
    <property type="match status" value="1"/>
</dbReference>
<dbReference type="PROSITE" id="PS00450">
    <property type="entry name" value="ACONITASE_1"/>
    <property type="match status" value="1"/>
</dbReference>
<dbReference type="PROSITE" id="PS01244">
    <property type="entry name" value="ACONITASE_2"/>
    <property type="match status" value="1"/>
</dbReference>
<comment type="function">
    <text evidence="1">Catalyzes the isomerization between 2-isopropylmalate and 3-isopropylmalate, via the formation of 2-isopropylmaleate.</text>
</comment>
<comment type="catalytic activity">
    <reaction evidence="1">
        <text>(2R,3S)-3-isopropylmalate = (2S)-2-isopropylmalate</text>
        <dbReference type="Rhea" id="RHEA:32287"/>
        <dbReference type="ChEBI" id="CHEBI:1178"/>
        <dbReference type="ChEBI" id="CHEBI:35121"/>
        <dbReference type="EC" id="4.2.1.33"/>
    </reaction>
</comment>
<comment type="cofactor">
    <cofactor evidence="1">
        <name>[4Fe-4S] cluster</name>
        <dbReference type="ChEBI" id="CHEBI:49883"/>
    </cofactor>
    <text evidence="1">Binds 1 [4Fe-4S] cluster per subunit.</text>
</comment>
<comment type="pathway">
    <text evidence="1">Amino-acid biosynthesis; L-leucine biosynthesis; L-leucine from 3-methyl-2-oxobutanoate: step 2/4.</text>
</comment>
<comment type="subunit">
    <text evidence="1">Heterodimer of LeuC and LeuD.</text>
</comment>
<comment type="similarity">
    <text evidence="1">Belongs to the aconitase/IPM isomerase family. LeuC type 1 subfamily.</text>
</comment>
<comment type="sequence caution" evidence="2">
    <conflict type="erroneous initiation">
        <sequence resource="EMBL-CDS" id="AAM87195"/>
    </conflict>
</comment>
<comment type="sequence caution" evidence="2">
    <conflict type="erroneous initiation">
        <sequence resource="EMBL-CDS" id="AAS63799"/>
    </conflict>
</comment>
<name>LEUC_YERPE</name>
<evidence type="ECO:0000255" key="1">
    <source>
        <dbReference type="HAMAP-Rule" id="MF_01026"/>
    </source>
</evidence>
<evidence type="ECO:0000305" key="2"/>
<accession>Q8ZIH0</accession>
<accession>Q0WJD5</accession>
<reference key="1">
    <citation type="journal article" date="2001" name="Nature">
        <title>Genome sequence of Yersinia pestis, the causative agent of plague.</title>
        <authorList>
            <person name="Parkhill J."/>
            <person name="Wren B.W."/>
            <person name="Thomson N.R."/>
            <person name="Titball R.W."/>
            <person name="Holden M.T.G."/>
            <person name="Prentice M.B."/>
            <person name="Sebaihia M."/>
            <person name="James K.D."/>
            <person name="Churcher C.M."/>
            <person name="Mungall K.L."/>
            <person name="Baker S."/>
            <person name="Basham D."/>
            <person name="Bentley S.D."/>
            <person name="Brooks K."/>
            <person name="Cerdeno-Tarraga A.-M."/>
            <person name="Chillingworth T."/>
            <person name="Cronin A."/>
            <person name="Davies R.M."/>
            <person name="Davis P."/>
            <person name="Dougan G."/>
            <person name="Feltwell T."/>
            <person name="Hamlin N."/>
            <person name="Holroyd S."/>
            <person name="Jagels K."/>
            <person name="Karlyshev A.V."/>
            <person name="Leather S."/>
            <person name="Moule S."/>
            <person name="Oyston P.C.F."/>
            <person name="Quail M.A."/>
            <person name="Rutherford K.M."/>
            <person name="Simmonds M."/>
            <person name="Skelton J."/>
            <person name="Stevens K."/>
            <person name="Whitehead S."/>
            <person name="Barrell B.G."/>
        </authorList>
    </citation>
    <scope>NUCLEOTIDE SEQUENCE [LARGE SCALE GENOMIC DNA]</scope>
    <source>
        <strain>CO-92 / Biovar Orientalis</strain>
    </source>
</reference>
<reference key="2">
    <citation type="journal article" date="2002" name="J. Bacteriol.">
        <title>Genome sequence of Yersinia pestis KIM.</title>
        <authorList>
            <person name="Deng W."/>
            <person name="Burland V."/>
            <person name="Plunkett G. III"/>
            <person name="Boutin A."/>
            <person name="Mayhew G.F."/>
            <person name="Liss P."/>
            <person name="Perna N.T."/>
            <person name="Rose D.J."/>
            <person name="Mau B."/>
            <person name="Zhou S."/>
            <person name="Schwartz D.C."/>
            <person name="Fetherston J.D."/>
            <person name="Lindler L.E."/>
            <person name="Brubaker R.R."/>
            <person name="Plano G.V."/>
            <person name="Straley S.C."/>
            <person name="McDonough K.A."/>
            <person name="Nilles M.L."/>
            <person name="Matson J.S."/>
            <person name="Blattner F.R."/>
            <person name="Perry R.D."/>
        </authorList>
    </citation>
    <scope>NUCLEOTIDE SEQUENCE [LARGE SCALE GENOMIC DNA]</scope>
    <source>
        <strain>KIM10+ / Biovar Mediaevalis</strain>
    </source>
</reference>
<reference key="3">
    <citation type="journal article" date="2004" name="DNA Res.">
        <title>Complete genome sequence of Yersinia pestis strain 91001, an isolate avirulent to humans.</title>
        <authorList>
            <person name="Song Y."/>
            <person name="Tong Z."/>
            <person name="Wang J."/>
            <person name="Wang L."/>
            <person name="Guo Z."/>
            <person name="Han Y."/>
            <person name="Zhang J."/>
            <person name="Pei D."/>
            <person name="Zhou D."/>
            <person name="Qin H."/>
            <person name="Pang X."/>
            <person name="Han Y."/>
            <person name="Zhai J."/>
            <person name="Li M."/>
            <person name="Cui B."/>
            <person name="Qi Z."/>
            <person name="Jin L."/>
            <person name="Dai R."/>
            <person name="Chen F."/>
            <person name="Li S."/>
            <person name="Ye C."/>
            <person name="Du Z."/>
            <person name="Lin W."/>
            <person name="Wang J."/>
            <person name="Yu J."/>
            <person name="Yang H."/>
            <person name="Wang J."/>
            <person name="Huang P."/>
            <person name="Yang R."/>
        </authorList>
    </citation>
    <scope>NUCLEOTIDE SEQUENCE [LARGE SCALE GENOMIC DNA]</scope>
    <source>
        <strain>91001 / Biovar Mediaevalis</strain>
    </source>
</reference>